<protein>
    <recommendedName>
        <fullName evidence="1">Segregation and condensation protein A</fullName>
    </recommendedName>
</protein>
<reference key="1">
    <citation type="submission" date="2008-10" db="EMBL/GenBank/DDBJ databases">
        <title>Genome sequence of Bacillus cereus AH187.</title>
        <authorList>
            <person name="Dodson R.J."/>
            <person name="Durkin A.S."/>
            <person name="Rosovitz M.J."/>
            <person name="Rasko D.A."/>
            <person name="Kolsto A.B."/>
            <person name="Okstad O.A."/>
            <person name="Ravel J."/>
            <person name="Sutton G."/>
        </authorList>
    </citation>
    <scope>NUCLEOTIDE SEQUENCE [LARGE SCALE GENOMIC DNA]</scope>
    <source>
        <strain>AH187</strain>
    </source>
</reference>
<comment type="function">
    <text evidence="1">Participates in chromosomal partition during cell division. May act via the formation of a condensin-like complex containing Smc and ScpB that pull DNA away from mid-cell into both cell halves.</text>
</comment>
<comment type="subunit">
    <text evidence="1">Component of a cohesin-like complex composed of ScpA, ScpB and the Smc homodimer, in which ScpA and ScpB bind to the head domain of Smc. The presence of the three proteins is required for the association of the complex with DNA.</text>
</comment>
<comment type="subcellular location">
    <subcellularLocation>
        <location evidence="1">Cytoplasm</location>
    </subcellularLocation>
    <text evidence="1">Associated with two foci at the outer edges of the nucleoid region in young cells, and at four foci within both cell halves in older cells.</text>
</comment>
<comment type="similarity">
    <text evidence="1">Belongs to the ScpA family.</text>
</comment>
<organism>
    <name type="scientific">Bacillus cereus (strain AH187)</name>
    <dbReference type="NCBI Taxonomy" id="405534"/>
    <lineage>
        <taxon>Bacteria</taxon>
        <taxon>Bacillati</taxon>
        <taxon>Bacillota</taxon>
        <taxon>Bacilli</taxon>
        <taxon>Bacillales</taxon>
        <taxon>Bacillaceae</taxon>
        <taxon>Bacillus</taxon>
        <taxon>Bacillus cereus group</taxon>
    </lineage>
</organism>
<dbReference type="EMBL" id="CP001177">
    <property type="protein sequence ID" value="ACJ79929.1"/>
    <property type="molecule type" value="Genomic_DNA"/>
</dbReference>
<dbReference type="SMR" id="B7HN36"/>
<dbReference type="KEGG" id="bcr:BCAH187_A4189"/>
<dbReference type="HOGENOM" id="CLU_038686_3_1_9"/>
<dbReference type="Proteomes" id="UP000002214">
    <property type="component" value="Chromosome"/>
</dbReference>
<dbReference type="GO" id="GO:0005737">
    <property type="term" value="C:cytoplasm"/>
    <property type="evidence" value="ECO:0007669"/>
    <property type="project" value="UniProtKB-SubCell"/>
</dbReference>
<dbReference type="GO" id="GO:0051301">
    <property type="term" value="P:cell division"/>
    <property type="evidence" value="ECO:0007669"/>
    <property type="project" value="UniProtKB-KW"/>
</dbReference>
<dbReference type="GO" id="GO:0007059">
    <property type="term" value="P:chromosome segregation"/>
    <property type="evidence" value="ECO:0007669"/>
    <property type="project" value="UniProtKB-UniRule"/>
</dbReference>
<dbReference type="GO" id="GO:0006260">
    <property type="term" value="P:DNA replication"/>
    <property type="evidence" value="ECO:0007669"/>
    <property type="project" value="UniProtKB-UniRule"/>
</dbReference>
<dbReference type="Gene3D" id="6.10.250.2410">
    <property type="match status" value="1"/>
</dbReference>
<dbReference type="Gene3D" id="1.10.10.580">
    <property type="entry name" value="Structural maintenance of chromosome 1. Chain E"/>
    <property type="match status" value="1"/>
</dbReference>
<dbReference type="HAMAP" id="MF_01805">
    <property type="entry name" value="ScpA"/>
    <property type="match status" value="1"/>
</dbReference>
<dbReference type="InterPro" id="IPR003768">
    <property type="entry name" value="ScpA"/>
</dbReference>
<dbReference type="InterPro" id="IPR023093">
    <property type="entry name" value="ScpA-like_C"/>
</dbReference>
<dbReference type="NCBIfam" id="NF000992">
    <property type="entry name" value="PRK00104.1-1"/>
    <property type="match status" value="1"/>
</dbReference>
<dbReference type="NCBIfam" id="NF000995">
    <property type="entry name" value="PRK00104.1-4"/>
    <property type="match status" value="1"/>
</dbReference>
<dbReference type="PANTHER" id="PTHR33969">
    <property type="entry name" value="SEGREGATION AND CONDENSATION PROTEIN A"/>
    <property type="match status" value="1"/>
</dbReference>
<dbReference type="PANTHER" id="PTHR33969:SF2">
    <property type="entry name" value="SEGREGATION AND CONDENSATION PROTEIN A"/>
    <property type="match status" value="1"/>
</dbReference>
<dbReference type="Pfam" id="PF02616">
    <property type="entry name" value="SMC_ScpA"/>
    <property type="match status" value="1"/>
</dbReference>
<gene>
    <name evidence="1" type="primary">scpA</name>
    <name type="ordered locus">BCAH187_A4189</name>
</gene>
<accession>B7HN36</accession>
<keyword id="KW-0131">Cell cycle</keyword>
<keyword id="KW-0132">Cell division</keyword>
<keyword id="KW-0159">Chromosome partition</keyword>
<keyword id="KW-0963">Cytoplasm</keyword>
<name>SCPA_BACC7</name>
<evidence type="ECO:0000255" key="1">
    <source>
        <dbReference type="HAMAP-Rule" id="MF_01805"/>
    </source>
</evidence>
<proteinExistence type="inferred from homology"/>
<sequence>MQYNFKVEAFEGPLDLLLHLIHRYEIDIYNIPVAEITEQYLSYVHTMKELQLDVASEYLVMAATLLQIKSKMLLPKHEEDVLDNGDDFIDDPRQELMERLIEYKKYKQVATELKEREQERAQLYTRPPIDFTSLQQEEETSLPLDVTLYDMLAAFQKLMRRKKAKKPVTTRITRQEIPIEQRMTDILKLLEIQGGRQSFYDLFVDDEREIMVVTFLAVLELMKNQQIVIEQEHNFDEIFVSSYTKSA</sequence>
<feature type="chain" id="PRO_1000187554" description="Segregation and condensation protein A">
    <location>
        <begin position="1"/>
        <end position="247"/>
    </location>
</feature>